<name>GLPK_FRATF</name>
<protein>
    <recommendedName>
        <fullName evidence="1">Glycerol kinase</fullName>
        <ecNumber evidence="1">2.7.1.30</ecNumber>
    </recommendedName>
    <alternativeName>
        <fullName evidence="1">ATP:glycerol 3-phosphotransferase</fullName>
    </alternativeName>
    <alternativeName>
        <fullName evidence="1">Glycerokinase</fullName>
        <shortName evidence="1">GK</shortName>
    </alternativeName>
</protein>
<evidence type="ECO:0000255" key="1">
    <source>
        <dbReference type="HAMAP-Rule" id="MF_00186"/>
    </source>
</evidence>
<proteinExistence type="inferred from homology"/>
<comment type="function">
    <text evidence="1">Key enzyme in the regulation of glycerol uptake and metabolism. Catalyzes the phosphorylation of glycerol to yield sn-glycerol 3-phosphate.</text>
</comment>
<comment type="catalytic activity">
    <reaction evidence="1">
        <text>glycerol + ATP = sn-glycerol 3-phosphate + ADP + H(+)</text>
        <dbReference type="Rhea" id="RHEA:21644"/>
        <dbReference type="ChEBI" id="CHEBI:15378"/>
        <dbReference type="ChEBI" id="CHEBI:17754"/>
        <dbReference type="ChEBI" id="CHEBI:30616"/>
        <dbReference type="ChEBI" id="CHEBI:57597"/>
        <dbReference type="ChEBI" id="CHEBI:456216"/>
        <dbReference type="EC" id="2.7.1.30"/>
    </reaction>
</comment>
<comment type="activity regulation">
    <text evidence="1">Inhibited by fructose 1,6-bisphosphate (FBP).</text>
</comment>
<comment type="pathway">
    <text evidence="1">Polyol metabolism; glycerol degradation via glycerol kinase pathway; sn-glycerol 3-phosphate from glycerol: step 1/1.</text>
</comment>
<comment type="similarity">
    <text evidence="1">Belongs to the FGGY kinase family.</text>
</comment>
<dbReference type="EC" id="2.7.1.30" evidence="1"/>
<dbReference type="EMBL" id="CP000803">
    <property type="protein sequence ID" value="ABU62214.1"/>
    <property type="molecule type" value="Genomic_DNA"/>
</dbReference>
<dbReference type="RefSeq" id="WP_003017064.1">
    <property type="nucleotide sequence ID" value="NC_009749.1"/>
</dbReference>
<dbReference type="SMR" id="A7NE12"/>
<dbReference type="KEGG" id="fta:FTA_1739"/>
<dbReference type="HOGENOM" id="CLU_009281_2_3_6"/>
<dbReference type="UniPathway" id="UPA00618">
    <property type="reaction ID" value="UER00672"/>
</dbReference>
<dbReference type="GO" id="GO:0005829">
    <property type="term" value="C:cytosol"/>
    <property type="evidence" value="ECO:0007669"/>
    <property type="project" value="TreeGrafter"/>
</dbReference>
<dbReference type="GO" id="GO:0005524">
    <property type="term" value="F:ATP binding"/>
    <property type="evidence" value="ECO:0007669"/>
    <property type="project" value="UniProtKB-UniRule"/>
</dbReference>
<dbReference type="GO" id="GO:0004370">
    <property type="term" value="F:glycerol kinase activity"/>
    <property type="evidence" value="ECO:0000250"/>
    <property type="project" value="UniProtKB"/>
</dbReference>
<dbReference type="GO" id="GO:0019563">
    <property type="term" value="P:glycerol catabolic process"/>
    <property type="evidence" value="ECO:0007669"/>
    <property type="project" value="UniProtKB-UniRule"/>
</dbReference>
<dbReference type="GO" id="GO:0006071">
    <property type="term" value="P:glycerol metabolic process"/>
    <property type="evidence" value="ECO:0000250"/>
    <property type="project" value="UniProtKB"/>
</dbReference>
<dbReference type="GO" id="GO:0006072">
    <property type="term" value="P:glycerol-3-phosphate metabolic process"/>
    <property type="evidence" value="ECO:0007669"/>
    <property type="project" value="InterPro"/>
</dbReference>
<dbReference type="CDD" id="cd07786">
    <property type="entry name" value="FGGY_EcGK_like"/>
    <property type="match status" value="1"/>
</dbReference>
<dbReference type="FunFam" id="3.30.420.40:FF:000007">
    <property type="entry name" value="Glycerol kinase"/>
    <property type="match status" value="1"/>
</dbReference>
<dbReference type="FunFam" id="3.30.420.40:FF:000008">
    <property type="entry name" value="Glycerol kinase"/>
    <property type="match status" value="1"/>
</dbReference>
<dbReference type="Gene3D" id="3.30.420.40">
    <property type="match status" value="2"/>
</dbReference>
<dbReference type="HAMAP" id="MF_00186">
    <property type="entry name" value="Glycerol_kin"/>
    <property type="match status" value="1"/>
</dbReference>
<dbReference type="InterPro" id="IPR043129">
    <property type="entry name" value="ATPase_NBD"/>
</dbReference>
<dbReference type="InterPro" id="IPR000577">
    <property type="entry name" value="Carb_kinase_FGGY"/>
</dbReference>
<dbReference type="InterPro" id="IPR018483">
    <property type="entry name" value="Carb_kinase_FGGY_CS"/>
</dbReference>
<dbReference type="InterPro" id="IPR018485">
    <property type="entry name" value="FGGY_C"/>
</dbReference>
<dbReference type="InterPro" id="IPR018484">
    <property type="entry name" value="FGGY_N"/>
</dbReference>
<dbReference type="InterPro" id="IPR005999">
    <property type="entry name" value="Glycerol_kin"/>
</dbReference>
<dbReference type="NCBIfam" id="TIGR01311">
    <property type="entry name" value="glycerol_kin"/>
    <property type="match status" value="1"/>
</dbReference>
<dbReference type="NCBIfam" id="NF000756">
    <property type="entry name" value="PRK00047.1"/>
    <property type="match status" value="1"/>
</dbReference>
<dbReference type="PANTHER" id="PTHR10196:SF69">
    <property type="entry name" value="GLYCEROL KINASE"/>
    <property type="match status" value="1"/>
</dbReference>
<dbReference type="PANTHER" id="PTHR10196">
    <property type="entry name" value="SUGAR KINASE"/>
    <property type="match status" value="1"/>
</dbReference>
<dbReference type="Pfam" id="PF02782">
    <property type="entry name" value="FGGY_C"/>
    <property type="match status" value="1"/>
</dbReference>
<dbReference type="Pfam" id="PF00370">
    <property type="entry name" value="FGGY_N"/>
    <property type="match status" value="1"/>
</dbReference>
<dbReference type="PIRSF" id="PIRSF000538">
    <property type="entry name" value="GlpK"/>
    <property type="match status" value="1"/>
</dbReference>
<dbReference type="SUPFAM" id="SSF53067">
    <property type="entry name" value="Actin-like ATPase domain"/>
    <property type="match status" value="2"/>
</dbReference>
<dbReference type="PROSITE" id="PS00933">
    <property type="entry name" value="FGGY_KINASES_1"/>
    <property type="match status" value="1"/>
</dbReference>
<dbReference type="PROSITE" id="PS00445">
    <property type="entry name" value="FGGY_KINASES_2"/>
    <property type="match status" value="1"/>
</dbReference>
<feature type="chain" id="PRO_1000058448" description="Glycerol kinase">
    <location>
        <begin position="1"/>
        <end position="502"/>
    </location>
</feature>
<feature type="binding site" evidence="1">
    <location>
        <position position="13"/>
    </location>
    <ligand>
        <name>ADP</name>
        <dbReference type="ChEBI" id="CHEBI:456216"/>
    </ligand>
</feature>
<feature type="binding site" evidence="1">
    <location>
        <position position="13"/>
    </location>
    <ligand>
        <name>ATP</name>
        <dbReference type="ChEBI" id="CHEBI:30616"/>
    </ligand>
</feature>
<feature type="binding site" evidence="1">
    <location>
        <position position="13"/>
    </location>
    <ligand>
        <name>sn-glycerol 3-phosphate</name>
        <dbReference type="ChEBI" id="CHEBI:57597"/>
    </ligand>
</feature>
<feature type="binding site" evidence="1">
    <location>
        <position position="14"/>
    </location>
    <ligand>
        <name>ATP</name>
        <dbReference type="ChEBI" id="CHEBI:30616"/>
    </ligand>
</feature>
<feature type="binding site" evidence="1">
    <location>
        <position position="15"/>
    </location>
    <ligand>
        <name>ATP</name>
        <dbReference type="ChEBI" id="CHEBI:30616"/>
    </ligand>
</feature>
<feature type="binding site" evidence="1">
    <location>
        <position position="17"/>
    </location>
    <ligand>
        <name>ADP</name>
        <dbReference type="ChEBI" id="CHEBI:456216"/>
    </ligand>
</feature>
<feature type="binding site" evidence="1">
    <location>
        <position position="83"/>
    </location>
    <ligand>
        <name>glycerol</name>
        <dbReference type="ChEBI" id="CHEBI:17754"/>
    </ligand>
</feature>
<feature type="binding site" evidence="1">
    <location>
        <position position="83"/>
    </location>
    <ligand>
        <name>sn-glycerol 3-phosphate</name>
        <dbReference type="ChEBI" id="CHEBI:57597"/>
    </ligand>
</feature>
<feature type="binding site" evidence="1">
    <location>
        <position position="84"/>
    </location>
    <ligand>
        <name>glycerol</name>
        <dbReference type="ChEBI" id="CHEBI:17754"/>
    </ligand>
</feature>
<feature type="binding site" evidence="1">
    <location>
        <position position="84"/>
    </location>
    <ligand>
        <name>sn-glycerol 3-phosphate</name>
        <dbReference type="ChEBI" id="CHEBI:57597"/>
    </ligand>
</feature>
<feature type="binding site" evidence="1">
    <location>
        <position position="136"/>
    </location>
    <ligand>
        <name>glycerol</name>
        <dbReference type="ChEBI" id="CHEBI:17754"/>
    </ligand>
</feature>
<feature type="binding site" evidence="1">
    <location>
        <position position="136"/>
    </location>
    <ligand>
        <name>sn-glycerol 3-phosphate</name>
        <dbReference type="ChEBI" id="CHEBI:57597"/>
    </ligand>
</feature>
<feature type="binding site" evidence="1">
    <location>
        <position position="246"/>
    </location>
    <ligand>
        <name>glycerol</name>
        <dbReference type="ChEBI" id="CHEBI:17754"/>
    </ligand>
</feature>
<feature type="binding site" evidence="1">
    <location>
        <position position="246"/>
    </location>
    <ligand>
        <name>sn-glycerol 3-phosphate</name>
        <dbReference type="ChEBI" id="CHEBI:57597"/>
    </ligand>
</feature>
<feature type="binding site" evidence="1">
    <location>
        <position position="247"/>
    </location>
    <ligand>
        <name>glycerol</name>
        <dbReference type="ChEBI" id="CHEBI:17754"/>
    </ligand>
</feature>
<feature type="binding site" evidence="1">
    <location>
        <position position="268"/>
    </location>
    <ligand>
        <name>ADP</name>
        <dbReference type="ChEBI" id="CHEBI:456216"/>
    </ligand>
</feature>
<feature type="binding site" evidence="1">
    <location>
        <position position="268"/>
    </location>
    <ligand>
        <name>ATP</name>
        <dbReference type="ChEBI" id="CHEBI:30616"/>
    </ligand>
</feature>
<feature type="binding site" evidence="1">
    <location>
        <position position="311"/>
    </location>
    <ligand>
        <name>ADP</name>
        <dbReference type="ChEBI" id="CHEBI:456216"/>
    </ligand>
</feature>
<feature type="binding site" evidence="1">
    <location>
        <position position="311"/>
    </location>
    <ligand>
        <name>ATP</name>
        <dbReference type="ChEBI" id="CHEBI:30616"/>
    </ligand>
</feature>
<feature type="binding site" evidence="1">
    <location>
        <position position="315"/>
    </location>
    <ligand>
        <name>ATP</name>
        <dbReference type="ChEBI" id="CHEBI:30616"/>
    </ligand>
</feature>
<feature type="binding site" evidence="1">
    <location>
        <position position="412"/>
    </location>
    <ligand>
        <name>ADP</name>
        <dbReference type="ChEBI" id="CHEBI:456216"/>
    </ligand>
</feature>
<feature type="binding site" evidence="1">
    <location>
        <position position="412"/>
    </location>
    <ligand>
        <name>ATP</name>
        <dbReference type="ChEBI" id="CHEBI:30616"/>
    </ligand>
</feature>
<feature type="binding site" evidence="1">
    <location>
        <position position="416"/>
    </location>
    <ligand>
        <name>ADP</name>
        <dbReference type="ChEBI" id="CHEBI:456216"/>
    </ligand>
</feature>
<organism>
    <name type="scientific">Francisella tularensis subsp. holarctica (strain FTNF002-00 / FTA)</name>
    <dbReference type="NCBI Taxonomy" id="458234"/>
    <lineage>
        <taxon>Bacteria</taxon>
        <taxon>Pseudomonadati</taxon>
        <taxon>Pseudomonadota</taxon>
        <taxon>Gammaproteobacteria</taxon>
        <taxon>Thiotrichales</taxon>
        <taxon>Francisellaceae</taxon>
        <taxon>Francisella</taxon>
    </lineage>
</organism>
<sequence>MSKDFILAIDQGTTSSRAIIFDKKGNIRKIAQKEFTQIYPKSGWVEHDAMEIWGTQSGVMREALEFGRVKPDQIAAIGITNQRETVVVWDKETGDPVYNAIVWQCRRTSSICDEIKRDPQFVKYIKENTGLVVDAYFSGTKVKWILDNVEGAREKANAGKLLMGTIDTWLIWNLTRGKVHATDYSNASRTMLFNINSLEWDKKILDYLNIPESMLPEVKNSSEVFGVTDSHTLGGAEIPIAGVAGDQHAALFGHCCFEKGMAKNTYGTGCFALMNVGDKPVYSDEGLLTTIAWAENGKPTYALEGSIFIVGAVIQWIRDGLGLVRSAEDSEYYATKIDSTNGVYLVPAFVGLGTPYWDMYARGTIVGITRDTKREHIIRAALEAIAYQAKDVLECMKEDTGLDLAGLRVDGGAVQNNFLMQFQSDILQSEISKPKINEITSLGAVFLAGLAVGFWKDKQELKSILTTEKVFEPQKDSQAVAHDYRGWKKAVERSKAWAECYS</sequence>
<accession>A7NE12</accession>
<reference key="1">
    <citation type="journal article" date="2009" name="PLoS ONE">
        <title>Complete genome sequence of Francisella tularensis subspecies holarctica FTNF002-00.</title>
        <authorList>
            <person name="Barabote R.D."/>
            <person name="Xie G."/>
            <person name="Brettin T.S."/>
            <person name="Hinrichs S.H."/>
            <person name="Fey P.D."/>
            <person name="Jay J.J."/>
            <person name="Engle J.L."/>
            <person name="Godbole S.D."/>
            <person name="Noronha J.M."/>
            <person name="Scheuermann R.H."/>
            <person name="Zhou L.W."/>
            <person name="Lion C."/>
            <person name="Dempsey M.P."/>
        </authorList>
    </citation>
    <scope>NUCLEOTIDE SEQUENCE [LARGE SCALE GENOMIC DNA]</scope>
    <source>
        <strain>FTNF002-00 / FTA</strain>
    </source>
</reference>
<gene>
    <name evidence="1" type="primary">glpK</name>
    <name type="ordered locus">FTA_1739</name>
</gene>
<keyword id="KW-0067">ATP-binding</keyword>
<keyword id="KW-0319">Glycerol metabolism</keyword>
<keyword id="KW-0418">Kinase</keyword>
<keyword id="KW-0547">Nucleotide-binding</keyword>
<keyword id="KW-0808">Transferase</keyword>